<organism>
    <name type="scientific">Korarchaeum cryptofilum (strain OPF8)</name>
    <dbReference type="NCBI Taxonomy" id="374847"/>
    <lineage>
        <taxon>Archaea</taxon>
        <taxon>Thermoproteota</taxon>
        <taxon>Candidatus Korarchaeia</taxon>
        <taxon>Candidatus Korarchaeales</taxon>
        <taxon>Candidatus Korarchaeaceae</taxon>
        <taxon>Candidatus Korarchaeum</taxon>
    </lineage>
</organism>
<evidence type="ECO:0000255" key="1">
    <source>
        <dbReference type="HAMAP-Rule" id="MF_00090"/>
    </source>
</evidence>
<reference key="1">
    <citation type="journal article" date="2008" name="Proc. Natl. Acad. Sci. U.S.A.">
        <title>A korarchaeal genome reveals new insights into the evolution of the Archaea.</title>
        <authorList>
            <person name="Elkins J.G."/>
            <person name="Podar M."/>
            <person name="Graham D.E."/>
            <person name="Makarova K.S."/>
            <person name="Wolf Y."/>
            <person name="Randau L."/>
            <person name="Hedlund B.P."/>
            <person name="Brochier-Armanet C."/>
            <person name="Kunin V."/>
            <person name="Anderson I."/>
            <person name="Lapidus A."/>
            <person name="Goltsman E."/>
            <person name="Barry K."/>
            <person name="Koonin E.V."/>
            <person name="Hugenholtz P."/>
            <person name="Kyrpides N."/>
            <person name="Wanner G."/>
            <person name="Richardson P."/>
            <person name="Keller M."/>
            <person name="Stetter K.O."/>
        </authorList>
    </citation>
    <scope>NUCLEOTIDE SEQUENCE [LARGE SCALE GENOMIC DNA]</scope>
    <source>
        <strain>OPF8</strain>
    </source>
</reference>
<dbReference type="EC" id="2.1.1.77" evidence="1"/>
<dbReference type="EMBL" id="CP000968">
    <property type="protein sequence ID" value="ACB08168.1"/>
    <property type="molecule type" value="Genomic_DNA"/>
</dbReference>
<dbReference type="RefSeq" id="WP_012310065.1">
    <property type="nucleotide sequence ID" value="NC_010482.1"/>
</dbReference>
<dbReference type="SMR" id="B1L6T9"/>
<dbReference type="FunCoup" id="B1L6T9">
    <property type="interactions" value="52"/>
</dbReference>
<dbReference type="STRING" id="374847.Kcr_1422"/>
<dbReference type="EnsemblBacteria" id="ACB08168">
    <property type="protein sequence ID" value="ACB08168"/>
    <property type="gene ID" value="Kcr_1422"/>
</dbReference>
<dbReference type="GeneID" id="6094699"/>
<dbReference type="KEGG" id="kcr:Kcr_1422"/>
<dbReference type="eggNOG" id="arCOG00976">
    <property type="taxonomic scope" value="Archaea"/>
</dbReference>
<dbReference type="HOGENOM" id="CLU_055432_2_0_2"/>
<dbReference type="InParanoid" id="B1L6T9"/>
<dbReference type="OrthoDB" id="33618at2157"/>
<dbReference type="PhylomeDB" id="B1L6T9"/>
<dbReference type="Proteomes" id="UP000001686">
    <property type="component" value="Chromosome"/>
</dbReference>
<dbReference type="GO" id="GO:0005737">
    <property type="term" value="C:cytoplasm"/>
    <property type="evidence" value="ECO:0000318"/>
    <property type="project" value="GO_Central"/>
</dbReference>
<dbReference type="GO" id="GO:0004719">
    <property type="term" value="F:protein-L-isoaspartate (D-aspartate) O-methyltransferase activity"/>
    <property type="evidence" value="ECO:0000318"/>
    <property type="project" value="GO_Central"/>
</dbReference>
<dbReference type="GO" id="GO:0032259">
    <property type="term" value="P:methylation"/>
    <property type="evidence" value="ECO:0007669"/>
    <property type="project" value="UniProtKB-KW"/>
</dbReference>
<dbReference type="GO" id="GO:0036211">
    <property type="term" value="P:protein modification process"/>
    <property type="evidence" value="ECO:0007669"/>
    <property type="project" value="UniProtKB-UniRule"/>
</dbReference>
<dbReference type="GO" id="GO:0030091">
    <property type="term" value="P:protein repair"/>
    <property type="evidence" value="ECO:0007669"/>
    <property type="project" value="UniProtKB-UniRule"/>
</dbReference>
<dbReference type="CDD" id="cd02440">
    <property type="entry name" value="AdoMet_MTases"/>
    <property type="match status" value="1"/>
</dbReference>
<dbReference type="FunFam" id="3.40.50.150:FF:000010">
    <property type="entry name" value="Protein-L-isoaspartate O-methyltransferase"/>
    <property type="match status" value="1"/>
</dbReference>
<dbReference type="Gene3D" id="3.40.50.150">
    <property type="entry name" value="Vaccinia Virus protein VP39"/>
    <property type="match status" value="1"/>
</dbReference>
<dbReference type="HAMAP" id="MF_00090">
    <property type="entry name" value="PIMT"/>
    <property type="match status" value="1"/>
</dbReference>
<dbReference type="InterPro" id="IPR000682">
    <property type="entry name" value="PCMT"/>
</dbReference>
<dbReference type="InterPro" id="IPR029063">
    <property type="entry name" value="SAM-dependent_MTases_sf"/>
</dbReference>
<dbReference type="NCBIfam" id="TIGR00080">
    <property type="entry name" value="pimt"/>
    <property type="match status" value="1"/>
</dbReference>
<dbReference type="NCBIfam" id="NF001453">
    <property type="entry name" value="PRK00312.1"/>
    <property type="match status" value="1"/>
</dbReference>
<dbReference type="PANTHER" id="PTHR11579">
    <property type="entry name" value="PROTEIN-L-ISOASPARTATE O-METHYLTRANSFERASE"/>
    <property type="match status" value="1"/>
</dbReference>
<dbReference type="PANTHER" id="PTHR11579:SF0">
    <property type="entry name" value="PROTEIN-L-ISOASPARTATE(D-ASPARTATE) O-METHYLTRANSFERASE"/>
    <property type="match status" value="1"/>
</dbReference>
<dbReference type="Pfam" id="PF01135">
    <property type="entry name" value="PCMT"/>
    <property type="match status" value="1"/>
</dbReference>
<dbReference type="SUPFAM" id="SSF53335">
    <property type="entry name" value="S-adenosyl-L-methionine-dependent methyltransferases"/>
    <property type="match status" value="1"/>
</dbReference>
<feature type="chain" id="PRO_0000351967" description="Protein-L-isoaspartate O-methyltransferase">
    <location>
        <begin position="1"/>
        <end position="221"/>
    </location>
</feature>
<feature type="active site" evidence="1">
    <location>
        <position position="57"/>
    </location>
</feature>
<proteinExistence type="inferred from homology"/>
<accession>B1L6T9</accession>
<comment type="function">
    <text evidence="1">Catalyzes the methyl esterification of L-isoaspartyl residues in peptides and proteins that result from spontaneous decomposition of normal L-aspartyl and L-asparaginyl residues. It plays a role in the repair and/or degradation of damaged proteins.</text>
</comment>
<comment type="catalytic activity">
    <reaction evidence="1">
        <text>[protein]-L-isoaspartate + S-adenosyl-L-methionine = [protein]-L-isoaspartate alpha-methyl ester + S-adenosyl-L-homocysteine</text>
        <dbReference type="Rhea" id="RHEA:12705"/>
        <dbReference type="Rhea" id="RHEA-COMP:12143"/>
        <dbReference type="Rhea" id="RHEA-COMP:12144"/>
        <dbReference type="ChEBI" id="CHEBI:57856"/>
        <dbReference type="ChEBI" id="CHEBI:59789"/>
        <dbReference type="ChEBI" id="CHEBI:90596"/>
        <dbReference type="ChEBI" id="CHEBI:90598"/>
        <dbReference type="EC" id="2.1.1.77"/>
    </reaction>
</comment>
<comment type="subcellular location">
    <subcellularLocation>
        <location evidence="1">Cytoplasm</location>
    </subcellularLocation>
</comment>
<comment type="similarity">
    <text evidence="1">Belongs to the methyltransferase superfamily. L-isoaspartyl/D-aspartyl protein methyltransferase family.</text>
</comment>
<sequence>MDHARLIESLVRRGIIKTEKVRRAAERVKRELFVPERYKEVAYEDIPLPIGDDQTISAPHMVFIMNEVLDLEEGQLVLEVGSGSGYHAATIAEIVAPSDSPPSRWGAVITVEINPRLASLAFENLSKAGYSSRVHVVNADGSSGLPLRRKVDRIVVTAAAPQIPPPLIEMLADGGKLVIPVGSPGFWGQDLLLVEKRGNNIIKKHITEVAFVPLRGRYGWS</sequence>
<name>PIMT_KORCO</name>
<protein>
    <recommendedName>
        <fullName evidence="1">Protein-L-isoaspartate O-methyltransferase</fullName>
        <ecNumber evidence="1">2.1.1.77</ecNumber>
    </recommendedName>
    <alternativeName>
        <fullName evidence="1">L-isoaspartyl protein carboxyl methyltransferase</fullName>
    </alternativeName>
    <alternativeName>
        <fullName evidence="1">Protein L-isoaspartyl methyltransferase</fullName>
    </alternativeName>
    <alternativeName>
        <fullName evidence="1">Protein-beta-aspartate methyltransferase</fullName>
        <shortName evidence="1">PIMT</shortName>
    </alternativeName>
</protein>
<keyword id="KW-0963">Cytoplasm</keyword>
<keyword id="KW-0489">Methyltransferase</keyword>
<keyword id="KW-1185">Reference proteome</keyword>
<keyword id="KW-0949">S-adenosyl-L-methionine</keyword>
<keyword id="KW-0808">Transferase</keyword>
<gene>
    <name evidence="1" type="primary">pcm</name>
    <name type="ordered locus">Kcr_1422</name>
</gene>